<proteinExistence type="evidence at transcript level"/>
<name>SM20_SCHMA</name>
<accession>P15845</accession>
<reference key="1">
    <citation type="submission" date="1992-09" db="EMBL/GenBank/DDBJ databases">
        <authorList>
            <person name="Stewart T.J."/>
            <person name="Smith A.L."/>
            <person name="Havercroft J.C."/>
        </authorList>
    </citation>
    <scope>NUCLEOTIDE SEQUENCE [MRNA]</scope>
</reference>
<reference key="2">
    <citation type="journal article" date="1990" name="Mol. Biochem. Parasitol.">
        <title>Characterisation of Sm20, a 20-kilodalton calcium-binding protein of Schistosoma mansoni.</title>
        <authorList>
            <person name="Havercroft J.C."/>
            <person name="Huggins M.C."/>
            <person name="Dunne D.W."/>
            <person name="Taylor D.W."/>
        </authorList>
    </citation>
    <scope>NUCLEOTIDE SEQUENCE [MRNA] OF 65-154</scope>
    <source>
        <strain>Puerto Rican</strain>
    </source>
</reference>
<evidence type="ECO:0000255" key="1">
    <source>
        <dbReference type="PROSITE-ProRule" id="PRU00448"/>
    </source>
</evidence>
<evidence type="ECO:0000305" key="2"/>
<sequence>MAFKIDDFTIQEDQVKIAKDVFKRFDKRGQEKISTTDLGPAFRALNLTVKPDTLKEWADQVDDDATGFIDFNGFLICYGKKLQEDQDERDLRDAFRVLDKNKRGEIDVEDLRWILKGLGDDLTEEEIDDMIRDTDTDGSGFVDFDEFYKLMTSE</sequence>
<comment type="function">
    <text>Calcium-binding protein.</text>
</comment>
<comment type="subcellular location">
    <subcellularLocation>
        <location>Tegument membrane</location>
    </subcellularLocation>
    <text>Associated with the tegumental membrane.</text>
</comment>
<comment type="developmental stage">
    <text>SM20 is expressed in schistosomula and adult worms, but not in eggs.</text>
</comment>
<feature type="chain" id="PRO_0000073734" description="20 kDa calcium-binding protein">
    <location>
        <begin position="1"/>
        <end position="154"/>
    </location>
</feature>
<feature type="domain" description="EF-hand 1" evidence="1">
    <location>
        <begin position="13"/>
        <end position="48"/>
    </location>
</feature>
<feature type="domain" description="EF-hand 2" evidence="1">
    <location>
        <begin position="49"/>
        <end position="84"/>
    </location>
</feature>
<feature type="domain" description="EF-hand 3" evidence="1">
    <location>
        <begin position="86"/>
        <end position="121"/>
    </location>
</feature>
<feature type="domain" description="EF-hand 4" evidence="1">
    <location>
        <begin position="122"/>
        <end position="154"/>
    </location>
</feature>
<feature type="binding site" evidence="2">
    <location>
        <position position="62"/>
    </location>
    <ligand>
        <name>Ca(2+)</name>
        <dbReference type="ChEBI" id="CHEBI:29108"/>
        <label>1</label>
    </ligand>
</feature>
<feature type="binding site" evidence="2">
    <location>
        <position position="64"/>
    </location>
    <ligand>
        <name>Ca(2+)</name>
        <dbReference type="ChEBI" id="CHEBI:29108"/>
        <label>1</label>
    </ligand>
</feature>
<feature type="binding site" evidence="2">
    <location>
        <position position="66"/>
    </location>
    <ligand>
        <name>Ca(2+)</name>
        <dbReference type="ChEBI" id="CHEBI:29108"/>
        <label>1</label>
    </ligand>
</feature>
<feature type="binding site" evidence="2">
    <location>
        <position position="99"/>
    </location>
    <ligand>
        <name>Ca(2+)</name>
        <dbReference type="ChEBI" id="CHEBI:29108"/>
        <label>2</label>
    </ligand>
</feature>
<feature type="binding site" evidence="2">
    <location>
        <position position="101"/>
    </location>
    <ligand>
        <name>Ca(2+)</name>
        <dbReference type="ChEBI" id="CHEBI:29108"/>
        <label>2</label>
    </ligand>
</feature>
<feature type="binding site" evidence="2">
    <location>
        <position position="105"/>
    </location>
    <ligand>
        <name>Ca(2+)</name>
        <dbReference type="ChEBI" id="CHEBI:29108"/>
        <label>2</label>
    </ligand>
</feature>
<feature type="binding site" evidence="2">
    <location>
        <position position="110"/>
    </location>
    <ligand>
        <name>Ca(2+)</name>
        <dbReference type="ChEBI" id="CHEBI:29108"/>
        <label>2</label>
    </ligand>
</feature>
<feature type="binding site" evidence="1">
    <location>
        <position position="135"/>
    </location>
    <ligand>
        <name>Ca(2+)</name>
        <dbReference type="ChEBI" id="CHEBI:29108"/>
        <label>3</label>
    </ligand>
</feature>
<feature type="binding site" evidence="1">
    <location>
        <position position="137"/>
    </location>
    <ligand>
        <name>Ca(2+)</name>
        <dbReference type="ChEBI" id="CHEBI:29108"/>
        <label>3</label>
    </ligand>
</feature>
<feature type="binding site" evidence="1">
    <location>
        <position position="139"/>
    </location>
    <ligand>
        <name>Ca(2+)</name>
        <dbReference type="ChEBI" id="CHEBI:29108"/>
        <label>3</label>
    </ligand>
</feature>
<feature type="binding site" evidence="1">
    <location>
        <position position="146"/>
    </location>
    <ligand>
        <name>Ca(2+)</name>
        <dbReference type="ChEBI" id="CHEBI:29108"/>
        <label>3</label>
    </ligand>
</feature>
<protein>
    <recommendedName>
        <fullName>20 kDa calcium-binding protein</fullName>
    </recommendedName>
    <alternativeName>
        <fullName>Antigen SM20</fullName>
    </alternativeName>
</protein>
<keyword id="KW-0106">Calcium</keyword>
<keyword id="KW-0472">Membrane</keyword>
<keyword id="KW-0479">Metal-binding</keyword>
<keyword id="KW-1185">Reference proteome</keyword>
<keyword id="KW-0677">Repeat</keyword>
<organism>
    <name type="scientific">Schistosoma mansoni</name>
    <name type="common">Blood fluke</name>
    <dbReference type="NCBI Taxonomy" id="6183"/>
    <lineage>
        <taxon>Eukaryota</taxon>
        <taxon>Metazoa</taxon>
        <taxon>Spiralia</taxon>
        <taxon>Lophotrochozoa</taxon>
        <taxon>Platyhelminthes</taxon>
        <taxon>Trematoda</taxon>
        <taxon>Digenea</taxon>
        <taxon>Strigeidida</taxon>
        <taxon>Schistosomatoidea</taxon>
        <taxon>Schistosomatidae</taxon>
        <taxon>Schistosoma</taxon>
    </lineage>
</organism>
<dbReference type="EMBL" id="M94045">
    <property type="protein sequence ID" value="AAA29921.1"/>
    <property type="molecule type" value="mRNA"/>
</dbReference>
<dbReference type="EMBL" id="M28888">
    <property type="protein sequence ID" value="AAA29926.1"/>
    <property type="molecule type" value="mRNA"/>
</dbReference>
<dbReference type="PIR" id="A44977">
    <property type="entry name" value="A44977"/>
</dbReference>
<dbReference type="SMR" id="P15845"/>
<dbReference type="FunCoup" id="P15845">
    <property type="interactions" value="12"/>
</dbReference>
<dbReference type="STRING" id="6183.P15845"/>
<dbReference type="eggNOG" id="KOG0027">
    <property type="taxonomic scope" value="Eukaryota"/>
</dbReference>
<dbReference type="HOGENOM" id="CLU_542212_0_0_1"/>
<dbReference type="InParanoid" id="P15845"/>
<dbReference type="Proteomes" id="UP000008854">
    <property type="component" value="Unassembled WGS sequence"/>
</dbReference>
<dbReference type="GO" id="GO:0016020">
    <property type="term" value="C:membrane"/>
    <property type="evidence" value="ECO:0007669"/>
    <property type="project" value="UniProtKB-KW"/>
</dbReference>
<dbReference type="GO" id="GO:0016460">
    <property type="term" value="C:myosin II complex"/>
    <property type="evidence" value="ECO:0007669"/>
    <property type="project" value="TreeGrafter"/>
</dbReference>
<dbReference type="GO" id="GO:0005509">
    <property type="term" value="F:calcium ion binding"/>
    <property type="evidence" value="ECO:0007669"/>
    <property type="project" value="InterPro"/>
</dbReference>
<dbReference type="CDD" id="cd00051">
    <property type="entry name" value="EFh"/>
    <property type="match status" value="1"/>
</dbReference>
<dbReference type="FunFam" id="1.10.238.10:FF:000001">
    <property type="entry name" value="Calmodulin 1"/>
    <property type="match status" value="1"/>
</dbReference>
<dbReference type="Gene3D" id="1.10.238.10">
    <property type="entry name" value="EF-hand"/>
    <property type="match status" value="3"/>
</dbReference>
<dbReference type="InterPro" id="IPR050230">
    <property type="entry name" value="CALM/Myosin/TropC-like"/>
</dbReference>
<dbReference type="InterPro" id="IPR011992">
    <property type="entry name" value="EF-hand-dom_pair"/>
</dbReference>
<dbReference type="InterPro" id="IPR018247">
    <property type="entry name" value="EF_Hand_1_Ca_BS"/>
</dbReference>
<dbReference type="InterPro" id="IPR002048">
    <property type="entry name" value="EF_hand_dom"/>
</dbReference>
<dbReference type="PANTHER" id="PTHR23048:SF0">
    <property type="entry name" value="CALMODULIN LIKE 3"/>
    <property type="match status" value="1"/>
</dbReference>
<dbReference type="PANTHER" id="PTHR23048">
    <property type="entry name" value="MYOSIN LIGHT CHAIN 1, 3"/>
    <property type="match status" value="1"/>
</dbReference>
<dbReference type="Pfam" id="PF13499">
    <property type="entry name" value="EF-hand_7"/>
    <property type="match status" value="1"/>
</dbReference>
<dbReference type="SMART" id="SM00054">
    <property type="entry name" value="EFh"/>
    <property type="match status" value="4"/>
</dbReference>
<dbReference type="SUPFAM" id="SSF47473">
    <property type="entry name" value="EF-hand"/>
    <property type="match status" value="1"/>
</dbReference>
<dbReference type="PROSITE" id="PS00018">
    <property type="entry name" value="EF_HAND_1"/>
    <property type="match status" value="1"/>
</dbReference>
<dbReference type="PROSITE" id="PS50222">
    <property type="entry name" value="EF_HAND_2"/>
    <property type="match status" value="4"/>
</dbReference>
<gene>
    <name type="primary">SM20</name>
</gene>